<accession>Q63CL4</accession>
<dbReference type="EMBL" id="CP000001">
    <property type="protein sequence ID" value="AAU18495.1"/>
    <property type="molecule type" value="Genomic_DNA"/>
</dbReference>
<dbReference type="RefSeq" id="WP_001205523.1">
    <property type="nucleotide sequence ID" value="NZ_CP009968.1"/>
</dbReference>
<dbReference type="SMR" id="Q63CL4"/>
<dbReference type="KEGG" id="bcz:BCE33L1758"/>
<dbReference type="PATRIC" id="fig|288681.22.peg.3777"/>
<dbReference type="Proteomes" id="UP000002612">
    <property type="component" value="Chromosome"/>
</dbReference>
<dbReference type="GO" id="GO:0003677">
    <property type="term" value="F:DNA binding"/>
    <property type="evidence" value="ECO:0007669"/>
    <property type="project" value="UniProtKB-KW"/>
</dbReference>
<dbReference type="GO" id="GO:0003700">
    <property type="term" value="F:DNA-binding transcription factor activity"/>
    <property type="evidence" value="ECO:0007669"/>
    <property type="project" value="InterPro"/>
</dbReference>
<dbReference type="CDD" id="cd00090">
    <property type="entry name" value="HTH_ARSR"/>
    <property type="match status" value="1"/>
</dbReference>
<dbReference type="FunFam" id="1.10.10.10:FF:000281">
    <property type="entry name" value="MarR family transcriptional regulator"/>
    <property type="match status" value="1"/>
</dbReference>
<dbReference type="Gene3D" id="1.10.10.10">
    <property type="entry name" value="Winged helix-like DNA-binding domain superfamily/Winged helix DNA-binding domain"/>
    <property type="match status" value="1"/>
</dbReference>
<dbReference type="InterPro" id="IPR011991">
    <property type="entry name" value="ArsR-like_HTH"/>
</dbReference>
<dbReference type="InterPro" id="IPR000835">
    <property type="entry name" value="HTH_MarR-typ"/>
</dbReference>
<dbReference type="InterPro" id="IPR036388">
    <property type="entry name" value="WH-like_DNA-bd_sf"/>
</dbReference>
<dbReference type="InterPro" id="IPR036390">
    <property type="entry name" value="WH_DNA-bd_sf"/>
</dbReference>
<dbReference type="PANTHER" id="PTHR42756">
    <property type="entry name" value="TRANSCRIPTIONAL REGULATOR, MARR"/>
    <property type="match status" value="1"/>
</dbReference>
<dbReference type="PANTHER" id="PTHR42756:SF1">
    <property type="entry name" value="TRANSCRIPTIONAL REPRESSOR OF EMRAB OPERON"/>
    <property type="match status" value="1"/>
</dbReference>
<dbReference type="Pfam" id="PF01047">
    <property type="entry name" value="MarR"/>
    <property type="match status" value="1"/>
</dbReference>
<dbReference type="PRINTS" id="PR00598">
    <property type="entry name" value="HTHMARR"/>
</dbReference>
<dbReference type="SMART" id="SM00347">
    <property type="entry name" value="HTH_MARR"/>
    <property type="match status" value="1"/>
</dbReference>
<dbReference type="SUPFAM" id="SSF46785">
    <property type="entry name" value="Winged helix' DNA-binding domain"/>
    <property type="match status" value="1"/>
</dbReference>
<dbReference type="PROSITE" id="PS50995">
    <property type="entry name" value="HTH_MARR_2"/>
    <property type="match status" value="1"/>
</dbReference>
<reference key="1">
    <citation type="journal article" date="2006" name="J. Bacteriol.">
        <title>Pathogenomic sequence analysis of Bacillus cereus and Bacillus thuringiensis isolates closely related to Bacillus anthracis.</title>
        <authorList>
            <person name="Han C.S."/>
            <person name="Xie G."/>
            <person name="Challacombe J.F."/>
            <person name="Altherr M.R."/>
            <person name="Bhotika S.S."/>
            <person name="Bruce D."/>
            <person name="Campbell C.S."/>
            <person name="Campbell M.L."/>
            <person name="Chen J."/>
            <person name="Chertkov O."/>
            <person name="Cleland C."/>
            <person name="Dimitrijevic M."/>
            <person name="Doggett N.A."/>
            <person name="Fawcett J.J."/>
            <person name="Glavina T."/>
            <person name="Goodwin L.A."/>
            <person name="Hill K.K."/>
            <person name="Hitchcock P."/>
            <person name="Jackson P.J."/>
            <person name="Keim P."/>
            <person name="Kewalramani A.R."/>
            <person name="Longmire J."/>
            <person name="Lucas S."/>
            <person name="Malfatti S."/>
            <person name="McMurry K."/>
            <person name="Meincke L.J."/>
            <person name="Misra M."/>
            <person name="Moseman B.L."/>
            <person name="Mundt M."/>
            <person name="Munk A.C."/>
            <person name="Okinaka R.T."/>
            <person name="Parson-Quintana B."/>
            <person name="Reilly L.P."/>
            <person name="Richardson P."/>
            <person name="Robinson D.L."/>
            <person name="Rubin E."/>
            <person name="Saunders E."/>
            <person name="Tapia R."/>
            <person name="Tesmer J.G."/>
            <person name="Thayer N."/>
            <person name="Thompson L.S."/>
            <person name="Tice H."/>
            <person name="Ticknor L.O."/>
            <person name="Wills P.L."/>
            <person name="Brettin T.S."/>
            <person name="Gilna P."/>
        </authorList>
    </citation>
    <scope>NUCLEOTIDE SEQUENCE [LARGE SCALE GENOMIC DNA]</scope>
    <source>
        <strain>ZK / E33L</strain>
    </source>
</reference>
<organism>
    <name type="scientific">Bacillus cereus (strain ZK / E33L)</name>
    <dbReference type="NCBI Taxonomy" id="288681"/>
    <lineage>
        <taxon>Bacteria</taxon>
        <taxon>Bacillati</taxon>
        <taxon>Bacillota</taxon>
        <taxon>Bacilli</taxon>
        <taxon>Bacillales</taxon>
        <taxon>Bacillaceae</taxon>
        <taxon>Bacillus</taxon>
        <taxon>Bacillus cereus group</taxon>
    </lineage>
</organism>
<keyword id="KW-0238">DNA-binding</keyword>
<keyword id="KW-0804">Transcription</keyword>
<keyword id="KW-0805">Transcription regulation</keyword>
<protein>
    <recommendedName>
        <fullName>Uncharacterized HTH-type transcriptional regulator BCE33L1758</fullName>
    </recommendedName>
</protein>
<gene>
    <name type="ordered locus">BCE33L1758</name>
</gene>
<evidence type="ECO:0000255" key="1">
    <source>
        <dbReference type="PROSITE-ProRule" id="PRU00345"/>
    </source>
</evidence>
<name>Y1758_BACCZ</name>
<sequence length="147" mass="17313">MRDNTIGSLIWLRLIRFTNQSNQMSNEFLKRFDLTTAQFDVLLQIRTYQPLTQMELAEKVTVTQGGISRMLTRLEKEGYIVRKQDWKTKTISLTEQGEAALERALPEQLAFQSSFFDDVLNEEEQKILYELMTKVHKHSEKKELPQE</sequence>
<feature type="chain" id="PRO_0000293593" description="Uncharacterized HTH-type transcriptional regulator BCE33L1758">
    <location>
        <begin position="1"/>
        <end position="147"/>
    </location>
</feature>
<feature type="domain" description="HTH marR-type" evidence="1">
    <location>
        <begin position="1"/>
        <end position="137"/>
    </location>
</feature>
<feature type="DNA-binding region" description="H-T-H motif" evidence="1">
    <location>
        <begin position="53"/>
        <end position="76"/>
    </location>
</feature>
<proteinExistence type="predicted"/>